<organism>
    <name type="scientific">Thermoanaerobacter sp. (strain X514)</name>
    <dbReference type="NCBI Taxonomy" id="399726"/>
    <lineage>
        <taxon>Bacteria</taxon>
        <taxon>Bacillati</taxon>
        <taxon>Bacillota</taxon>
        <taxon>Clostridia</taxon>
        <taxon>Thermoanaerobacterales</taxon>
        <taxon>Thermoanaerobacteraceae</taxon>
        <taxon>Thermoanaerobacter</taxon>
    </lineage>
</organism>
<protein>
    <recommendedName>
        <fullName evidence="1">Thymidine kinase</fullName>
        <ecNumber evidence="1">2.7.1.21</ecNumber>
    </recommendedName>
</protein>
<reference key="1">
    <citation type="submission" date="2008-01" db="EMBL/GenBank/DDBJ databases">
        <title>Complete sequence of Thermoanaerobacter sp. X514.</title>
        <authorList>
            <consortium name="US DOE Joint Genome Institute"/>
            <person name="Copeland A."/>
            <person name="Lucas S."/>
            <person name="Lapidus A."/>
            <person name="Barry K."/>
            <person name="Glavina del Rio T."/>
            <person name="Dalin E."/>
            <person name="Tice H."/>
            <person name="Pitluck S."/>
            <person name="Bruce D."/>
            <person name="Goodwin L."/>
            <person name="Saunders E."/>
            <person name="Brettin T."/>
            <person name="Detter J.C."/>
            <person name="Han C."/>
            <person name="Schmutz J."/>
            <person name="Larimer F."/>
            <person name="Land M."/>
            <person name="Hauser L."/>
            <person name="Kyrpides N."/>
            <person name="Kim E."/>
            <person name="Hemme C."/>
            <person name="Fields M.W."/>
            <person name="He Z."/>
            <person name="Zhou J."/>
            <person name="Richardson P."/>
        </authorList>
    </citation>
    <scope>NUCLEOTIDE SEQUENCE [LARGE SCALE GENOMIC DNA]</scope>
    <source>
        <strain>X514</strain>
    </source>
</reference>
<dbReference type="EC" id="2.7.1.21" evidence="1"/>
<dbReference type="EMBL" id="CP000923">
    <property type="protein sequence ID" value="ABY91413.1"/>
    <property type="molecule type" value="Genomic_DNA"/>
</dbReference>
<dbReference type="SMR" id="B0K1F4"/>
<dbReference type="KEGG" id="tex:Teth514_0091"/>
<dbReference type="HOGENOM" id="CLU_064400_3_0_9"/>
<dbReference type="Proteomes" id="UP000002155">
    <property type="component" value="Chromosome"/>
</dbReference>
<dbReference type="GO" id="GO:0005829">
    <property type="term" value="C:cytosol"/>
    <property type="evidence" value="ECO:0007669"/>
    <property type="project" value="TreeGrafter"/>
</dbReference>
<dbReference type="GO" id="GO:0005524">
    <property type="term" value="F:ATP binding"/>
    <property type="evidence" value="ECO:0007669"/>
    <property type="project" value="UniProtKB-UniRule"/>
</dbReference>
<dbReference type="GO" id="GO:0004797">
    <property type="term" value="F:thymidine kinase activity"/>
    <property type="evidence" value="ECO:0007669"/>
    <property type="project" value="UniProtKB-UniRule"/>
</dbReference>
<dbReference type="GO" id="GO:0008270">
    <property type="term" value="F:zinc ion binding"/>
    <property type="evidence" value="ECO:0007669"/>
    <property type="project" value="UniProtKB-UniRule"/>
</dbReference>
<dbReference type="GO" id="GO:0071897">
    <property type="term" value="P:DNA biosynthetic process"/>
    <property type="evidence" value="ECO:0007669"/>
    <property type="project" value="UniProtKB-KW"/>
</dbReference>
<dbReference type="GO" id="GO:0046104">
    <property type="term" value="P:thymidine metabolic process"/>
    <property type="evidence" value="ECO:0007669"/>
    <property type="project" value="TreeGrafter"/>
</dbReference>
<dbReference type="FunFam" id="3.30.60.20:FF:000026">
    <property type="entry name" value="Thymidine kinase"/>
    <property type="match status" value="1"/>
</dbReference>
<dbReference type="FunFam" id="3.40.50.300:FF:000384">
    <property type="entry name" value="Thymidine kinase"/>
    <property type="match status" value="1"/>
</dbReference>
<dbReference type="Gene3D" id="3.30.60.20">
    <property type="match status" value="1"/>
</dbReference>
<dbReference type="Gene3D" id="3.40.50.300">
    <property type="entry name" value="P-loop containing nucleotide triphosphate hydrolases"/>
    <property type="match status" value="1"/>
</dbReference>
<dbReference type="HAMAP" id="MF_00124">
    <property type="entry name" value="Thymidine_kinase"/>
    <property type="match status" value="1"/>
</dbReference>
<dbReference type="InterPro" id="IPR027417">
    <property type="entry name" value="P-loop_NTPase"/>
</dbReference>
<dbReference type="InterPro" id="IPR001267">
    <property type="entry name" value="Thymidine_kinase"/>
</dbReference>
<dbReference type="InterPro" id="IPR020633">
    <property type="entry name" value="Thymidine_kinase_CS"/>
</dbReference>
<dbReference type="NCBIfam" id="NF003296">
    <property type="entry name" value="PRK04296.1-1"/>
    <property type="match status" value="1"/>
</dbReference>
<dbReference type="PANTHER" id="PTHR11441">
    <property type="entry name" value="THYMIDINE KINASE"/>
    <property type="match status" value="1"/>
</dbReference>
<dbReference type="PANTHER" id="PTHR11441:SF0">
    <property type="entry name" value="THYMIDINE KINASE, CYTOSOLIC"/>
    <property type="match status" value="1"/>
</dbReference>
<dbReference type="Pfam" id="PF00265">
    <property type="entry name" value="TK"/>
    <property type="match status" value="1"/>
</dbReference>
<dbReference type="PIRSF" id="PIRSF035805">
    <property type="entry name" value="TK_cell"/>
    <property type="match status" value="1"/>
</dbReference>
<dbReference type="SUPFAM" id="SSF57716">
    <property type="entry name" value="Glucocorticoid receptor-like (DNA-binding domain)"/>
    <property type="match status" value="1"/>
</dbReference>
<dbReference type="SUPFAM" id="SSF52540">
    <property type="entry name" value="P-loop containing nucleoside triphosphate hydrolases"/>
    <property type="match status" value="1"/>
</dbReference>
<dbReference type="PROSITE" id="PS00603">
    <property type="entry name" value="TK_CELLULAR_TYPE"/>
    <property type="match status" value="1"/>
</dbReference>
<sequence length="193" mass="21525">MIYGSLDHGFIEVIVGPMFSGKSEELIRRIKRAQIAKQKVQVFKPAIDDRYSIDKVVSHNGTNINAISVVKAFEIIELLEEDTEVIAIDEIQFFDHSIVDVVREIADLGKRVICAGLDMDFRGEPFGPTPDVMAIAESVDKLTAICVKCGNPATRTQRLINGKPAKYDDPIILVGAHETYEARCRKCHEVPRT</sequence>
<feature type="chain" id="PRO_1000095437" description="Thymidine kinase">
    <location>
        <begin position="1"/>
        <end position="193"/>
    </location>
</feature>
<feature type="active site" description="Proton acceptor" evidence="1">
    <location>
        <position position="90"/>
    </location>
</feature>
<feature type="binding site" evidence="1">
    <location>
        <begin position="16"/>
        <end position="23"/>
    </location>
    <ligand>
        <name>ATP</name>
        <dbReference type="ChEBI" id="CHEBI:30616"/>
    </ligand>
</feature>
<feature type="binding site" evidence="1">
    <location>
        <begin position="89"/>
        <end position="92"/>
    </location>
    <ligand>
        <name>ATP</name>
        <dbReference type="ChEBI" id="CHEBI:30616"/>
    </ligand>
</feature>
<feature type="binding site" evidence="1">
    <location>
        <position position="146"/>
    </location>
    <ligand>
        <name>Zn(2+)</name>
        <dbReference type="ChEBI" id="CHEBI:29105"/>
    </ligand>
</feature>
<feature type="binding site" evidence="1">
    <location>
        <position position="149"/>
    </location>
    <ligand>
        <name>Zn(2+)</name>
        <dbReference type="ChEBI" id="CHEBI:29105"/>
    </ligand>
</feature>
<feature type="binding site" evidence="1">
    <location>
        <position position="184"/>
    </location>
    <ligand>
        <name>Zn(2+)</name>
        <dbReference type="ChEBI" id="CHEBI:29105"/>
    </ligand>
</feature>
<feature type="binding site" evidence="1">
    <location>
        <position position="187"/>
    </location>
    <ligand>
        <name>Zn(2+)</name>
        <dbReference type="ChEBI" id="CHEBI:29105"/>
    </ligand>
</feature>
<accession>B0K1F4</accession>
<comment type="catalytic activity">
    <reaction evidence="1">
        <text>thymidine + ATP = dTMP + ADP + H(+)</text>
        <dbReference type="Rhea" id="RHEA:19129"/>
        <dbReference type="ChEBI" id="CHEBI:15378"/>
        <dbReference type="ChEBI" id="CHEBI:17748"/>
        <dbReference type="ChEBI" id="CHEBI:30616"/>
        <dbReference type="ChEBI" id="CHEBI:63528"/>
        <dbReference type="ChEBI" id="CHEBI:456216"/>
        <dbReference type="EC" id="2.7.1.21"/>
    </reaction>
</comment>
<comment type="subunit">
    <text evidence="1">Homotetramer.</text>
</comment>
<comment type="subcellular location">
    <subcellularLocation>
        <location evidence="1">Cytoplasm</location>
    </subcellularLocation>
</comment>
<comment type="similarity">
    <text evidence="1">Belongs to the thymidine kinase family.</text>
</comment>
<evidence type="ECO:0000255" key="1">
    <source>
        <dbReference type="HAMAP-Rule" id="MF_00124"/>
    </source>
</evidence>
<name>KITH_THEPX</name>
<keyword id="KW-0067">ATP-binding</keyword>
<keyword id="KW-0963">Cytoplasm</keyword>
<keyword id="KW-0237">DNA synthesis</keyword>
<keyword id="KW-0418">Kinase</keyword>
<keyword id="KW-0479">Metal-binding</keyword>
<keyword id="KW-0547">Nucleotide-binding</keyword>
<keyword id="KW-0808">Transferase</keyword>
<keyword id="KW-0862">Zinc</keyword>
<gene>
    <name evidence="1" type="primary">tdk</name>
    <name type="ordered locus">Teth514_0091</name>
</gene>
<proteinExistence type="inferred from homology"/>